<accession>Q5A0W7</accession>
<accession>A0A1D8PMN2</accession>
<protein>
    <recommendedName>
        <fullName>RuvB-like helicase 1</fullName>
        <ecNumber>3.6.4.12</ecNumber>
    </recommendedName>
</protein>
<comment type="function">
    <text evidence="1">DNA helicase which participates in several chromatin remodeling complexes, including the SWR1 and the INO80 complexes. The SWR1 complex mediates the ATP-dependent exchange of histone H2A for the H2A variant HZT1 leading to transcriptional regulation of selected genes by chromatin remodeling. The INO80 complex remodels chromatin by shifting nucleosomes and is involved in DNA repair. Also involved in pre-rRNA processing (By similarity).</text>
</comment>
<comment type="catalytic activity">
    <reaction>
        <text>ATP + H2O = ADP + phosphate + H(+)</text>
        <dbReference type="Rhea" id="RHEA:13065"/>
        <dbReference type="ChEBI" id="CHEBI:15377"/>
        <dbReference type="ChEBI" id="CHEBI:15378"/>
        <dbReference type="ChEBI" id="CHEBI:30616"/>
        <dbReference type="ChEBI" id="CHEBI:43474"/>
        <dbReference type="ChEBI" id="CHEBI:456216"/>
        <dbReference type="EC" id="3.6.4.12"/>
    </reaction>
</comment>
<comment type="subunit">
    <text evidence="1">May form heterododecamers with RVB2. Component of the SWR1 chromatin remodeling complex, the INO80 chromatin remodeling complex, and of the R2TP complex (By similarity).</text>
</comment>
<comment type="subcellular location">
    <subcellularLocation>
        <location evidence="1">Nucleus</location>
    </subcellularLocation>
</comment>
<comment type="similarity">
    <text evidence="3">Belongs to the RuvB family.</text>
</comment>
<keyword id="KW-0010">Activator</keyword>
<keyword id="KW-0067">ATP-binding</keyword>
<keyword id="KW-0156">Chromatin regulator</keyword>
<keyword id="KW-0227">DNA damage</keyword>
<keyword id="KW-0234">DNA repair</keyword>
<keyword id="KW-0347">Helicase</keyword>
<keyword id="KW-0378">Hydrolase</keyword>
<keyword id="KW-0547">Nucleotide-binding</keyword>
<keyword id="KW-0539">Nucleus</keyword>
<keyword id="KW-1185">Reference proteome</keyword>
<keyword id="KW-0804">Transcription</keyword>
<keyword id="KW-0805">Transcription regulation</keyword>
<proteinExistence type="inferred from homology"/>
<dbReference type="EC" id="3.6.4.12"/>
<dbReference type="EMBL" id="CP017626">
    <property type="protein sequence ID" value="AOW29401.1"/>
    <property type="molecule type" value="Genomic_DNA"/>
</dbReference>
<dbReference type="RefSeq" id="XP_715438.1">
    <property type="nucleotide sequence ID" value="XM_710345.2"/>
</dbReference>
<dbReference type="SMR" id="Q5A0W7"/>
<dbReference type="BioGRID" id="1225958">
    <property type="interactions" value="3"/>
</dbReference>
<dbReference type="FunCoup" id="Q5A0W7">
    <property type="interactions" value="1607"/>
</dbReference>
<dbReference type="STRING" id="237561.Q5A0W7"/>
<dbReference type="EnsemblFungi" id="C4_06800W_A-T">
    <property type="protein sequence ID" value="C4_06800W_A-T-p1"/>
    <property type="gene ID" value="C4_06800W_A"/>
</dbReference>
<dbReference type="GeneID" id="3642917"/>
<dbReference type="KEGG" id="cal:CAALFM_C406800WA"/>
<dbReference type="CGD" id="CAL0000181596">
    <property type="gene designation" value="RVB1"/>
</dbReference>
<dbReference type="VEuPathDB" id="FungiDB:C4_06800W_A"/>
<dbReference type="eggNOG" id="KOG1942">
    <property type="taxonomic scope" value="Eukaryota"/>
</dbReference>
<dbReference type="HOGENOM" id="CLU_028311_1_1_1"/>
<dbReference type="InParanoid" id="Q5A0W7"/>
<dbReference type="OMA" id="RTLPYNK"/>
<dbReference type="OrthoDB" id="10060499at2759"/>
<dbReference type="PRO" id="PR:Q5A0W7"/>
<dbReference type="Proteomes" id="UP000000559">
    <property type="component" value="Chromosome 4"/>
</dbReference>
<dbReference type="GO" id="GO:0031011">
    <property type="term" value="C:Ino80 complex"/>
    <property type="evidence" value="ECO:0000318"/>
    <property type="project" value="GO_Central"/>
</dbReference>
<dbReference type="GO" id="GO:0035267">
    <property type="term" value="C:NuA4 histone acetyltransferase complex"/>
    <property type="evidence" value="ECO:0000318"/>
    <property type="project" value="GO_Central"/>
</dbReference>
<dbReference type="GO" id="GO:0097255">
    <property type="term" value="C:R2TP complex"/>
    <property type="evidence" value="ECO:0000318"/>
    <property type="project" value="GO_Central"/>
</dbReference>
<dbReference type="GO" id="GO:0000812">
    <property type="term" value="C:Swr1 complex"/>
    <property type="evidence" value="ECO:0000318"/>
    <property type="project" value="GO_Central"/>
</dbReference>
<dbReference type="GO" id="GO:0043138">
    <property type="term" value="F:3'-5' DNA helicase activity"/>
    <property type="evidence" value="ECO:0007669"/>
    <property type="project" value="EnsemblFungi"/>
</dbReference>
<dbReference type="GO" id="GO:0043139">
    <property type="term" value="F:5'-3' DNA helicase activity"/>
    <property type="evidence" value="ECO:0007669"/>
    <property type="project" value="EnsemblFungi"/>
</dbReference>
<dbReference type="GO" id="GO:0005524">
    <property type="term" value="F:ATP binding"/>
    <property type="evidence" value="ECO:0007669"/>
    <property type="project" value="UniProtKB-KW"/>
</dbReference>
<dbReference type="GO" id="GO:0016887">
    <property type="term" value="F:ATP hydrolysis activity"/>
    <property type="evidence" value="ECO:0007669"/>
    <property type="project" value="InterPro"/>
</dbReference>
<dbReference type="GO" id="GO:0003678">
    <property type="term" value="F:DNA helicase activity"/>
    <property type="evidence" value="ECO:0000318"/>
    <property type="project" value="GO_Central"/>
</dbReference>
<dbReference type="GO" id="GO:0000492">
    <property type="term" value="P:box C/D snoRNP assembly"/>
    <property type="evidence" value="ECO:0000318"/>
    <property type="project" value="GO_Central"/>
</dbReference>
<dbReference type="GO" id="GO:0006338">
    <property type="term" value="P:chromatin remodeling"/>
    <property type="evidence" value="ECO:0000318"/>
    <property type="project" value="GO_Central"/>
</dbReference>
<dbReference type="GO" id="GO:0006281">
    <property type="term" value="P:DNA repair"/>
    <property type="evidence" value="ECO:0007669"/>
    <property type="project" value="UniProtKB-KW"/>
</dbReference>
<dbReference type="GO" id="GO:0006357">
    <property type="term" value="P:regulation of transcription by RNA polymerase II"/>
    <property type="evidence" value="ECO:0000318"/>
    <property type="project" value="GO_Central"/>
</dbReference>
<dbReference type="FunFam" id="1.10.8.60:FF:000010">
    <property type="entry name" value="RuvB-like helicase"/>
    <property type="match status" value="1"/>
</dbReference>
<dbReference type="FunFam" id="2.40.50.360:FF:000001">
    <property type="entry name" value="RuvB-like helicase"/>
    <property type="match status" value="1"/>
</dbReference>
<dbReference type="Gene3D" id="1.10.8.60">
    <property type="match status" value="1"/>
</dbReference>
<dbReference type="Gene3D" id="3.40.50.300">
    <property type="entry name" value="P-loop containing nucleotide triphosphate hydrolases"/>
    <property type="match status" value="1"/>
</dbReference>
<dbReference type="Gene3D" id="2.40.50.360">
    <property type="entry name" value="RuvB-like helicase, domain II"/>
    <property type="match status" value="1"/>
</dbReference>
<dbReference type="InterPro" id="IPR003593">
    <property type="entry name" value="AAA+_ATPase"/>
</dbReference>
<dbReference type="InterPro" id="IPR027417">
    <property type="entry name" value="P-loop_NTPase"/>
</dbReference>
<dbReference type="InterPro" id="IPR027238">
    <property type="entry name" value="RuvB-like"/>
</dbReference>
<dbReference type="InterPro" id="IPR041048">
    <property type="entry name" value="RuvB-like_C"/>
</dbReference>
<dbReference type="InterPro" id="IPR042487">
    <property type="entry name" value="RuvBL1/2_DNA/RNA_bd_dom"/>
</dbReference>
<dbReference type="InterPro" id="IPR010339">
    <property type="entry name" value="TIP49_P-loop"/>
</dbReference>
<dbReference type="PANTHER" id="PTHR11093">
    <property type="entry name" value="RUVB-RELATED REPTIN AND PONTIN"/>
    <property type="match status" value="1"/>
</dbReference>
<dbReference type="Pfam" id="PF06068">
    <property type="entry name" value="TIP49"/>
    <property type="match status" value="1"/>
</dbReference>
<dbReference type="Pfam" id="PF17856">
    <property type="entry name" value="TIP49_C"/>
    <property type="match status" value="1"/>
</dbReference>
<dbReference type="SMART" id="SM00382">
    <property type="entry name" value="AAA"/>
    <property type="match status" value="1"/>
</dbReference>
<dbReference type="SUPFAM" id="SSF52540">
    <property type="entry name" value="P-loop containing nucleoside triphosphate hydrolases"/>
    <property type="match status" value="1"/>
</dbReference>
<gene>
    <name type="primary">RVB1</name>
    <name type="ordered locus">CAALFM_C406800WA</name>
    <name type="ORF">CaO19.10641</name>
    <name type="ORF">CaO19.3129</name>
</gene>
<sequence length="458" mass="49990">MVQITEVKENQSSRESRTAAHTHIKGLGLNEQGIAKPIEGGFVGQNEAREACGIIVDLIKSKKMSGKAVLIAGPPATGKTALALAISQELGPKVPFCPIVGSELYSAEVKKTSALMENFRRAIGLRIKETKEVYEGEVIELTPEEAENPLGGYGKTISHVIVGLKSAKGTKTLRLDPVIYESIQKERVTIGDVIYIEANTGAVKRVGRSDAYATEFDLEAEEYVPLPKGEVHKKKEIVQDVTLHDLDVANARPQGGQDVLSMMGQLLKPKKTEITDKLRTEVNKVVSKYIEQGVAELVPGVLFIDEVNMLDMEIFTYLNRALESSIAPIVVLASNRGLTTVRGSDDGVKAPHGCPPDLIDRLLIVRTLPYNQEEIKTIIGKRASLEGLTLTDDALEKLSKQGLTTSLRYAVQLLTPAGVLSTTAGRSEITVQDIEECEFLFLDSRRSTKVLQETKTFL</sequence>
<organism>
    <name type="scientific">Candida albicans (strain SC5314 / ATCC MYA-2876)</name>
    <name type="common">Yeast</name>
    <dbReference type="NCBI Taxonomy" id="237561"/>
    <lineage>
        <taxon>Eukaryota</taxon>
        <taxon>Fungi</taxon>
        <taxon>Dikarya</taxon>
        <taxon>Ascomycota</taxon>
        <taxon>Saccharomycotina</taxon>
        <taxon>Pichiomycetes</taxon>
        <taxon>Debaryomycetaceae</taxon>
        <taxon>Candida/Lodderomyces clade</taxon>
        <taxon>Candida</taxon>
    </lineage>
</organism>
<name>RUVB1_CANAL</name>
<feature type="chain" id="PRO_0000165650" description="RuvB-like helicase 1">
    <location>
        <begin position="1"/>
        <end position="458"/>
    </location>
</feature>
<feature type="region of interest" description="Disordered" evidence="2">
    <location>
        <begin position="1"/>
        <end position="20"/>
    </location>
</feature>
<feature type="compositionally biased region" description="Basic and acidic residues" evidence="2">
    <location>
        <begin position="1"/>
        <end position="18"/>
    </location>
</feature>
<feature type="binding site" evidence="1">
    <location>
        <begin position="73"/>
        <end position="80"/>
    </location>
    <ligand>
        <name>ATP</name>
        <dbReference type="ChEBI" id="CHEBI:30616"/>
    </ligand>
</feature>
<evidence type="ECO:0000250" key="1"/>
<evidence type="ECO:0000256" key="2">
    <source>
        <dbReference type="SAM" id="MobiDB-lite"/>
    </source>
</evidence>
<evidence type="ECO:0000305" key="3"/>
<reference key="1">
    <citation type="journal article" date="2004" name="Proc. Natl. Acad. Sci. U.S.A.">
        <title>The diploid genome sequence of Candida albicans.</title>
        <authorList>
            <person name="Jones T."/>
            <person name="Federspiel N.A."/>
            <person name="Chibana H."/>
            <person name="Dungan J."/>
            <person name="Kalman S."/>
            <person name="Magee B.B."/>
            <person name="Newport G."/>
            <person name="Thorstenson Y.R."/>
            <person name="Agabian N."/>
            <person name="Magee P.T."/>
            <person name="Davis R.W."/>
            <person name="Scherer S."/>
        </authorList>
    </citation>
    <scope>NUCLEOTIDE SEQUENCE [LARGE SCALE GENOMIC DNA]</scope>
    <source>
        <strain>SC5314 / ATCC MYA-2876</strain>
    </source>
</reference>
<reference key="2">
    <citation type="journal article" date="2007" name="Genome Biol.">
        <title>Assembly of the Candida albicans genome into sixteen supercontigs aligned on the eight chromosomes.</title>
        <authorList>
            <person name="van het Hoog M."/>
            <person name="Rast T.J."/>
            <person name="Martchenko M."/>
            <person name="Grindle S."/>
            <person name="Dignard D."/>
            <person name="Hogues H."/>
            <person name="Cuomo C."/>
            <person name="Berriman M."/>
            <person name="Scherer S."/>
            <person name="Magee B.B."/>
            <person name="Whiteway M."/>
            <person name="Chibana H."/>
            <person name="Nantel A."/>
            <person name="Magee P.T."/>
        </authorList>
    </citation>
    <scope>GENOME REANNOTATION</scope>
    <source>
        <strain>SC5314 / ATCC MYA-2876</strain>
    </source>
</reference>
<reference key="3">
    <citation type="journal article" date="2013" name="Genome Biol.">
        <title>Assembly of a phased diploid Candida albicans genome facilitates allele-specific measurements and provides a simple model for repeat and indel structure.</title>
        <authorList>
            <person name="Muzzey D."/>
            <person name="Schwartz K."/>
            <person name="Weissman J.S."/>
            <person name="Sherlock G."/>
        </authorList>
    </citation>
    <scope>NUCLEOTIDE SEQUENCE [LARGE SCALE GENOMIC DNA]</scope>
    <scope>GENOME REANNOTATION</scope>
    <source>
        <strain>SC5314 / ATCC MYA-2876</strain>
    </source>
</reference>